<proteinExistence type="inferred from homology"/>
<gene>
    <name type="primary">insH11</name>
    <name type="ordered locus">b3505</name>
    <name type="ordered locus">JW3472</name>
</gene>
<reference key="1">
    <citation type="journal article" date="1994" name="Nucleic Acids Res.">
        <title>Analysis of the Escherichia coli genome. V. DNA sequence of the region from 76.0 to 81.5 minutes.</title>
        <authorList>
            <person name="Sofia H.J."/>
            <person name="Burland V."/>
            <person name="Daniels D.L."/>
            <person name="Plunkett G. III"/>
            <person name="Blattner F.R."/>
        </authorList>
    </citation>
    <scope>NUCLEOTIDE SEQUENCE [LARGE SCALE GENOMIC DNA]</scope>
    <source>
        <strain>K12 / MG1655 / ATCC 47076</strain>
    </source>
</reference>
<reference key="2">
    <citation type="journal article" date="1996" name="DNA Res.">
        <title>A 570-kb DNA sequence of the Escherichia coli K-12 genome corresponding to the 28.0-40.1 min region on the linkage map.</title>
        <authorList>
            <person name="Aiba H."/>
            <person name="Baba T."/>
            <person name="Fujita K."/>
            <person name="Hayashi K."/>
            <person name="Inada T."/>
            <person name="Isono K."/>
            <person name="Itoh T."/>
            <person name="Kasai H."/>
            <person name="Kashimoto K."/>
            <person name="Kimura S."/>
            <person name="Kitakawa M."/>
            <person name="Kitagawa M."/>
            <person name="Makino K."/>
            <person name="Miki T."/>
            <person name="Mizobuchi K."/>
            <person name="Mori H."/>
            <person name="Mori T."/>
            <person name="Motomura K."/>
            <person name="Nakade S."/>
            <person name="Nakamura Y."/>
            <person name="Nashimoto H."/>
            <person name="Nishio Y."/>
            <person name="Oshima T."/>
            <person name="Saito N."/>
            <person name="Sampei G."/>
            <person name="Seki Y."/>
            <person name="Sivasundaram S."/>
            <person name="Tagami H."/>
            <person name="Takeda J."/>
            <person name="Takemoto K."/>
            <person name="Takeuchi Y."/>
            <person name="Wada C."/>
            <person name="Yamamoto Y."/>
            <person name="Horiuchi T."/>
        </authorList>
    </citation>
    <scope>NUCLEOTIDE SEQUENCE [LARGE SCALE GENOMIC DNA]</scope>
    <source>
        <strain>K12 / W3110 / ATCC 27325 / DSM 5911</strain>
    </source>
</reference>
<reference key="3">
    <citation type="journal article" date="1996" name="DNA Res.">
        <title>A 460-kb DNA sequence of the Escherichia coli K-12 genome corresponding to the 40.1-50.0 min region on the linkage map.</title>
        <authorList>
            <person name="Itoh T."/>
            <person name="Aiba H."/>
            <person name="Baba T."/>
            <person name="Fujita K."/>
            <person name="Hayashi K."/>
            <person name="Inada T."/>
            <person name="Isono K."/>
            <person name="Kasai H."/>
            <person name="Kimura S."/>
            <person name="Kitakawa M."/>
            <person name="Kitagawa M."/>
            <person name="Makino K."/>
            <person name="Miki T."/>
            <person name="Mizobuchi K."/>
            <person name="Mori H."/>
            <person name="Mori T."/>
            <person name="Motomura K."/>
            <person name="Nakade S."/>
            <person name="Nakamura Y."/>
            <person name="Nashimoto H."/>
            <person name="Nishio Y."/>
            <person name="Oshima T."/>
            <person name="Saito N."/>
            <person name="Sampei G."/>
            <person name="Seki Y."/>
            <person name="Sivasundaram S."/>
            <person name="Tagami H."/>
            <person name="Takeda J."/>
            <person name="Takemoto K."/>
            <person name="Wada C."/>
            <person name="Yamamoto Y."/>
            <person name="Horiuchi T."/>
        </authorList>
    </citation>
    <scope>NUCLEOTIDE SEQUENCE [LARGE SCALE GENOMIC DNA]</scope>
    <source>
        <strain>K12 / W3110 / ATCC 27325 / DSM 5911</strain>
    </source>
</reference>
<reference key="4">
    <citation type="submission" date="1997-01" db="EMBL/GenBank/DDBJ databases">
        <title>Sequence of minutes 4-25 of Escherichia coli.</title>
        <authorList>
            <person name="Chung E."/>
            <person name="Allen E."/>
            <person name="Araujo R."/>
            <person name="Aparicio A.M."/>
            <person name="Davis K."/>
            <person name="Duncan M."/>
            <person name="Federspiel N."/>
            <person name="Hyman R."/>
            <person name="Kalman S."/>
            <person name="Komp C."/>
            <person name="Kurdi O."/>
            <person name="Lew H."/>
            <person name="Lin D."/>
            <person name="Namath A."/>
            <person name="Oefner P."/>
            <person name="Roberts D."/>
            <person name="Schramm S."/>
            <person name="Davis R.W."/>
        </authorList>
    </citation>
    <scope>NUCLEOTIDE SEQUENCE [LARGE SCALE GENOMIC DNA]</scope>
    <source>
        <strain>K12 / MG1655 / ATCC 47076</strain>
    </source>
</reference>
<reference key="5">
    <citation type="journal article" date="1997" name="Science">
        <title>The complete genome sequence of Escherichia coli K-12.</title>
        <authorList>
            <person name="Blattner F.R."/>
            <person name="Plunkett G. III"/>
            <person name="Bloch C.A."/>
            <person name="Perna N.T."/>
            <person name="Burland V."/>
            <person name="Riley M."/>
            <person name="Collado-Vides J."/>
            <person name="Glasner J.D."/>
            <person name="Rode C.K."/>
            <person name="Mayhew G.F."/>
            <person name="Gregor J."/>
            <person name="Davis N.W."/>
            <person name="Kirkpatrick H.A."/>
            <person name="Goeden M.A."/>
            <person name="Rose D.J."/>
            <person name="Mau B."/>
            <person name="Shao Y."/>
        </authorList>
    </citation>
    <scope>NUCLEOTIDE SEQUENCE [LARGE SCALE GENOMIC DNA]</scope>
    <source>
        <strain>K12 / MG1655 / ATCC 47076</strain>
    </source>
</reference>
<reference key="6">
    <citation type="journal article" date="2006" name="Mol. Syst. Biol.">
        <title>Highly accurate genome sequences of Escherichia coli K-12 strains MG1655 and W3110.</title>
        <authorList>
            <person name="Hayashi K."/>
            <person name="Morooka N."/>
            <person name="Yamamoto Y."/>
            <person name="Fujita K."/>
            <person name="Isono K."/>
            <person name="Choi S."/>
            <person name="Ohtsubo E."/>
            <person name="Baba T."/>
            <person name="Wanner B.L."/>
            <person name="Mori H."/>
            <person name="Horiuchi T."/>
        </authorList>
    </citation>
    <scope>NUCLEOTIDE SEQUENCE [LARGE SCALE GENOMIC DNA]</scope>
    <source>
        <strain>K12 / W3110 / ATCC 27325 / DSM 5911</strain>
    </source>
</reference>
<comment type="function">
    <text>Involved in the transposition of the insertion sequence IS5.</text>
</comment>
<comment type="similarity">
    <text evidence="1">Belongs to the transposase 11 family.</text>
</comment>
<comment type="sequence caution" evidence="1">
    <conflict type="erroneous initiation">
        <sequence resource="EMBL-CDS" id="AAB18481"/>
    </conflict>
    <text>Extended N-terminus.</text>
</comment>
<comment type="sequence caution" evidence="1">
    <conflict type="erroneous initiation">
        <sequence resource="EMBL-CDS" id="BAE77789"/>
    </conflict>
    <text>Extended N-terminus.</text>
</comment>
<name>INH11_ECOLI</name>
<sequence length="326" mass="37851">MSHQLTFADSEFSSKRRQTRKEIFLSRMEQILPWQNMVEVIEPFYPKAGNGRRPYPLETMLRIHCMQHWYNLSDGAMEDALYEIASMRLFARLSLDSALPDRTTIMNFRHLLEQHQLARQLFKTINRWLAEAGVMMTQGTLVDATIIEAPSSTKNKEQQRDPEMHQTKKGNQWHFGMKAHIGVDAKSGLTHSLVTTAANEHDLNQLGNLLHGEEQFVSADAGYQGAPQREELAEVDVDWLIAERPGKVRTLKQHPRKNKTAINIEYMKASIRARVEHPFRIIKRQFGFVKARYKGLLKNDNQLAMLFTLANLFRADQMIRQWERSH</sequence>
<evidence type="ECO:0000305" key="1"/>
<organism>
    <name type="scientific">Escherichia coli (strain K12)</name>
    <dbReference type="NCBI Taxonomy" id="83333"/>
    <lineage>
        <taxon>Bacteria</taxon>
        <taxon>Pseudomonadati</taxon>
        <taxon>Pseudomonadota</taxon>
        <taxon>Gammaproteobacteria</taxon>
        <taxon>Enterobacterales</taxon>
        <taxon>Enterobacteriaceae</taxon>
        <taxon>Escherichia</taxon>
    </lineage>
</organism>
<keyword id="KW-0233">DNA recombination</keyword>
<keyword id="KW-0238">DNA-binding</keyword>
<keyword id="KW-1185">Reference proteome</keyword>
<keyword id="KW-0814">Transposable element</keyword>
<keyword id="KW-0815">Transposition</keyword>
<dbReference type="EMBL" id="U00039">
    <property type="protein sequence ID" value="AAB18481.1"/>
    <property type="status" value="ALT_INIT"/>
    <property type="molecule type" value="Genomic_DNA"/>
</dbReference>
<dbReference type="EMBL" id="U00096">
    <property type="protein sequence ID" value="AAC76530.2"/>
    <property type="molecule type" value="Genomic_DNA"/>
</dbReference>
<dbReference type="EMBL" id="AP009048">
    <property type="protein sequence ID" value="BAE77789.1"/>
    <property type="status" value="ALT_INIT"/>
    <property type="molecule type" value="Genomic_DNA"/>
</dbReference>
<dbReference type="RefSeq" id="NP_414793.1">
    <property type="nucleotide sequence ID" value="NC_000913.3"/>
</dbReference>
<dbReference type="RefSeq" id="NP_415084.1">
    <property type="nucleotide sequence ID" value="NC_000913.3"/>
</dbReference>
<dbReference type="RefSeq" id="NP_415189.1">
    <property type="nucleotide sequence ID" value="NC_000913.3"/>
</dbReference>
<dbReference type="RefSeq" id="NP_415847.1">
    <property type="nucleotide sequence ID" value="NC_000913.3"/>
</dbReference>
<dbReference type="RefSeq" id="NP_416535.1">
    <property type="nucleotide sequence ID" value="NC_000913.3"/>
</dbReference>
<dbReference type="RefSeq" id="NP_416696.1">
    <property type="nucleotide sequence ID" value="NC_000913.3"/>
</dbReference>
<dbReference type="RefSeq" id="NP_417456.1">
    <property type="nucleotide sequence ID" value="NC_000913.3"/>
</dbReference>
<dbReference type="RefSeq" id="NP_417685.1">
    <property type="nucleotide sequence ID" value="NC_000913.3"/>
</dbReference>
<dbReference type="RefSeq" id="NP_417962.1">
    <property type="nucleotide sequence ID" value="NC_000913.3"/>
</dbReference>
<dbReference type="RefSeq" id="WP_000019403.1">
    <property type="nucleotide sequence ID" value="NZ_SSZK01000120.1"/>
</dbReference>
<dbReference type="FunCoup" id="P0CE58">
    <property type="interactions" value="11"/>
</dbReference>
<dbReference type="jPOST" id="P0CE58"/>
<dbReference type="EnsemblBacteria" id="AAC76530">
    <property type="protein sequence ID" value="AAC76530"/>
    <property type="gene ID" value="b3505"/>
</dbReference>
<dbReference type="GeneID" id="948015"/>
<dbReference type="KEGG" id="ecj:JW3472"/>
<dbReference type="KEGG" id="eco:b0259"/>
<dbReference type="KEGG" id="eco:b0552"/>
<dbReference type="KEGG" id="eco:b0656"/>
<dbReference type="KEGG" id="eco:b2030"/>
<dbReference type="KEGG" id="eco:b2192"/>
<dbReference type="KEGG" id="eco:b2982"/>
<dbReference type="KEGG" id="eco:b3218"/>
<dbReference type="KEGG" id="eco:b3505"/>
<dbReference type="KEGG" id="eco:b4711"/>
<dbReference type="KEGG" id="ecoc:C3026_01250"/>
<dbReference type="KEGG" id="ecoc:C3026_02730"/>
<dbReference type="KEGG" id="ecoc:C3026_03280"/>
<dbReference type="KEGG" id="ecoc:C3026_07795"/>
<dbReference type="KEGG" id="ecoc:C3026_10760"/>
<dbReference type="KEGG" id="ecoc:C3026_11440"/>
<dbReference type="KEGG" id="ecoc:C3026_12250"/>
<dbReference type="KEGG" id="ecoc:C3026_16315"/>
<dbReference type="KEGG" id="ecoc:C3026_17505"/>
<dbReference type="KEGG" id="ecoc:C3026_18985"/>
<dbReference type="KEGG" id="ecoc:C3026_23975"/>
<dbReference type="EchoBASE" id="EB4742"/>
<dbReference type="HOGENOM" id="CLU_049873_1_2_6"/>
<dbReference type="InParanoid" id="P0CE58"/>
<dbReference type="PhylomeDB" id="P0CE58"/>
<dbReference type="BioCyc" id="EcoCyc:MONOMER0-4241"/>
<dbReference type="PRO" id="PR:P0CE58"/>
<dbReference type="Proteomes" id="UP000000625">
    <property type="component" value="Chromosome"/>
</dbReference>
<dbReference type="GO" id="GO:0005829">
    <property type="term" value="C:cytosol"/>
    <property type="evidence" value="ECO:0000318"/>
    <property type="project" value="GO_Central"/>
</dbReference>
<dbReference type="GO" id="GO:0003677">
    <property type="term" value="F:DNA binding"/>
    <property type="evidence" value="ECO:0007669"/>
    <property type="project" value="UniProtKB-KW"/>
</dbReference>
<dbReference type="GO" id="GO:0004803">
    <property type="term" value="F:transposase activity"/>
    <property type="evidence" value="ECO:0000318"/>
    <property type="project" value="GO_Central"/>
</dbReference>
<dbReference type="GO" id="GO:0006313">
    <property type="term" value="P:DNA transposition"/>
    <property type="evidence" value="ECO:0000318"/>
    <property type="project" value="GO_Central"/>
</dbReference>
<dbReference type="InterPro" id="IPR047959">
    <property type="entry name" value="Transpos_IS5"/>
</dbReference>
<dbReference type="InterPro" id="IPR002559">
    <property type="entry name" value="Transposase_11"/>
</dbReference>
<dbReference type="InterPro" id="IPR008490">
    <property type="entry name" value="Transposase_InsH_N"/>
</dbReference>
<dbReference type="NCBIfam" id="NF033581">
    <property type="entry name" value="transpos_IS5_4"/>
    <property type="match status" value="1"/>
</dbReference>
<dbReference type="PANTHER" id="PTHR35604">
    <property type="entry name" value="TRANSPOSASE INSH FOR INSERTION SEQUENCE ELEMENT IS5A-RELATED"/>
    <property type="match status" value="1"/>
</dbReference>
<dbReference type="PANTHER" id="PTHR35604:SF2">
    <property type="entry name" value="TRANSPOSASE INSH FOR INSERTION SEQUENCE ELEMENT IS5A-RELATED"/>
    <property type="match status" value="1"/>
</dbReference>
<dbReference type="Pfam" id="PF01609">
    <property type="entry name" value="DDE_Tnp_1"/>
    <property type="match status" value="1"/>
</dbReference>
<dbReference type="Pfam" id="PF05598">
    <property type="entry name" value="DUF772"/>
    <property type="match status" value="1"/>
</dbReference>
<accession>P0CE58</accession>
<accession>O07987</accession>
<accession>O07988</accession>
<accession>P03837</accession>
<accession>P76355</accession>
<accession>Q2MBK1</accession>
<accession>Q2MBM8</accession>
<feature type="chain" id="PRO_0000392489" description="Transposase InsH for insertion sequence element IS5T">
    <location>
        <begin position="1"/>
        <end position="326"/>
    </location>
</feature>
<protein>
    <recommendedName>
        <fullName>Transposase InsH for insertion sequence element IS5T</fullName>
    </recommendedName>
</protein>